<gene>
    <name evidence="1" type="primary">tdk</name>
    <name type="ordered locus">MS1764</name>
</gene>
<evidence type="ECO:0000255" key="1">
    <source>
        <dbReference type="HAMAP-Rule" id="MF_00124"/>
    </source>
</evidence>
<comment type="catalytic activity">
    <reaction evidence="1">
        <text>thymidine + ATP = dTMP + ADP + H(+)</text>
        <dbReference type="Rhea" id="RHEA:19129"/>
        <dbReference type="ChEBI" id="CHEBI:15378"/>
        <dbReference type="ChEBI" id="CHEBI:17748"/>
        <dbReference type="ChEBI" id="CHEBI:30616"/>
        <dbReference type="ChEBI" id="CHEBI:63528"/>
        <dbReference type="ChEBI" id="CHEBI:456216"/>
        <dbReference type="EC" id="2.7.1.21"/>
    </reaction>
</comment>
<comment type="subunit">
    <text evidence="1">Homotetramer.</text>
</comment>
<comment type="subcellular location">
    <subcellularLocation>
        <location evidence="1">Cytoplasm</location>
    </subcellularLocation>
</comment>
<comment type="similarity">
    <text evidence="1">Belongs to the thymidine kinase family.</text>
</comment>
<accession>Q65RN9</accession>
<name>KITH_MANSM</name>
<dbReference type="EC" id="2.7.1.21" evidence="1"/>
<dbReference type="EMBL" id="AE016827">
    <property type="protein sequence ID" value="AAU38371.1"/>
    <property type="molecule type" value="Genomic_DNA"/>
</dbReference>
<dbReference type="RefSeq" id="WP_011200929.1">
    <property type="nucleotide sequence ID" value="NC_006300.1"/>
</dbReference>
<dbReference type="SMR" id="Q65RN9"/>
<dbReference type="STRING" id="221988.MS1764"/>
<dbReference type="KEGG" id="msu:MS1764"/>
<dbReference type="eggNOG" id="COG1435">
    <property type="taxonomic scope" value="Bacteria"/>
</dbReference>
<dbReference type="HOGENOM" id="CLU_064400_2_1_6"/>
<dbReference type="OrthoDB" id="9781579at2"/>
<dbReference type="Proteomes" id="UP000000607">
    <property type="component" value="Chromosome"/>
</dbReference>
<dbReference type="GO" id="GO:0005829">
    <property type="term" value="C:cytosol"/>
    <property type="evidence" value="ECO:0007669"/>
    <property type="project" value="TreeGrafter"/>
</dbReference>
<dbReference type="GO" id="GO:0005524">
    <property type="term" value="F:ATP binding"/>
    <property type="evidence" value="ECO:0007669"/>
    <property type="project" value="UniProtKB-UniRule"/>
</dbReference>
<dbReference type="GO" id="GO:0004797">
    <property type="term" value="F:thymidine kinase activity"/>
    <property type="evidence" value="ECO:0007669"/>
    <property type="project" value="UniProtKB-UniRule"/>
</dbReference>
<dbReference type="GO" id="GO:0008270">
    <property type="term" value="F:zinc ion binding"/>
    <property type="evidence" value="ECO:0007669"/>
    <property type="project" value="UniProtKB-UniRule"/>
</dbReference>
<dbReference type="GO" id="GO:0071897">
    <property type="term" value="P:DNA biosynthetic process"/>
    <property type="evidence" value="ECO:0007669"/>
    <property type="project" value="UniProtKB-KW"/>
</dbReference>
<dbReference type="GO" id="GO:0046104">
    <property type="term" value="P:thymidine metabolic process"/>
    <property type="evidence" value="ECO:0007669"/>
    <property type="project" value="TreeGrafter"/>
</dbReference>
<dbReference type="FunFam" id="3.40.50.300:FF:000323">
    <property type="entry name" value="Thymidine kinase"/>
    <property type="match status" value="1"/>
</dbReference>
<dbReference type="Gene3D" id="3.30.60.20">
    <property type="match status" value="1"/>
</dbReference>
<dbReference type="Gene3D" id="3.40.50.300">
    <property type="entry name" value="P-loop containing nucleotide triphosphate hydrolases"/>
    <property type="match status" value="1"/>
</dbReference>
<dbReference type="HAMAP" id="MF_00124">
    <property type="entry name" value="Thymidine_kinase"/>
    <property type="match status" value="1"/>
</dbReference>
<dbReference type="InterPro" id="IPR027417">
    <property type="entry name" value="P-loop_NTPase"/>
</dbReference>
<dbReference type="InterPro" id="IPR001267">
    <property type="entry name" value="Thymidine_kinase"/>
</dbReference>
<dbReference type="InterPro" id="IPR020633">
    <property type="entry name" value="Thymidine_kinase_CS"/>
</dbReference>
<dbReference type="NCBIfam" id="NF003300">
    <property type="entry name" value="PRK04296.1-5"/>
    <property type="match status" value="1"/>
</dbReference>
<dbReference type="PANTHER" id="PTHR11441">
    <property type="entry name" value="THYMIDINE KINASE"/>
    <property type="match status" value="1"/>
</dbReference>
<dbReference type="PANTHER" id="PTHR11441:SF0">
    <property type="entry name" value="THYMIDINE KINASE, CYTOSOLIC"/>
    <property type="match status" value="1"/>
</dbReference>
<dbReference type="Pfam" id="PF00265">
    <property type="entry name" value="TK"/>
    <property type="match status" value="1"/>
</dbReference>
<dbReference type="PIRSF" id="PIRSF035805">
    <property type="entry name" value="TK_cell"/>
    <property type="match status" value="1"/>
</dbReference>
<dbReference type="SUPFAM" id="SSF57716">
    <property type="entry name" value="Glucocorticoid receptor-like (DNA-binding domain)"/>
    <property type="match status" value="1"/>
</dbReference>
<dbReference type="SUPFAM" id="SSF52540">
    <property type="entry name" value="P-loop containing nucleoside triphosphate hydrolases"/>
    <property type="match status" value="1"/>
</dbReference>
<dbReference type="PROSITE" id="PS00603">
    <property type="entry name" value="TK_CELLULAR_TYPE"/>
    <property type="match status" value="1"/>
</dbReference>
<feature type="chain" id="PRO_0000174991" description="Thymidine kinase">
    <location>
        <begin position="1"/>
        <end position="195"/>
    </location>
</feature>
<feature type="active site" description="Proton acceptor" evidence="1">
    <location>
        <position position="88"/>
    </location>
</feature>
<feature type="binding site" evidence="1">
    <location>
        <begin position="9"/>
        <end position="16"/>
    </location>
    <ligand>
        <name>ATP</name>
        <dbReference type="ChEBI" id="CHEBI:30616"/>
    </ligand>
</feature>
<feature type="binding site" evidence="1">
    <location>
        <begin position="87"/>
        <end position="90"/>
    </location>
    <ligand>
        <name>ATP</name>
        <dbReference type="ChEBI" id="CHEBI:30616"/>
    </ligand>
</feature>
<feature type="binding site" evidence="1">
    <location>
        <position position="145"/>
    </location>
    <ligand>
        <name>Zn(2+)</name>
        <dbReference type="ChEBI" id="CHEBI:29105"/>
    </ligand>
</feature>
<feature type="binding site" evidence="1">
    <location>
        <position position="147"/>
    </location>
    <ligand>
        <name>Zn(2+)</name>
        <dbReference type="ChEBI" id="CHEBI:29105"/>
    </ligand>
</feature>
<feature type="binding site" evidence="1">
    <location>
        <position position="182"/>
    </location>
    <ligand>
        <name>Zn(2+)</name>
        <dbReference type="ChEBI" id="CHEBI:29105"/>
    </ligand>
</feature>
<feature type="binding site" evidence="1">
    <location>
        <position position="185"/>
    </location>
    <ligand>
        <name>Zn(2+)</name>
        <dbReference type="ChEBI" id="CHEBI:29105"/>
    </ligand>
</feature>
<organism>
    <name type="scientific">Mannheimia succiniciproducens (strain KCTC 0769BP / MBEL55E)</name>
    <dbReference type="NCBI Taxonomy" id="221988"/>
    <lineage>
        <taxon>Bacteria</taxon>
        <taxon>Pseudomonadati</taxon>
        <taxon>Pseudomonadota</taxon>
        <taxon>Gammaproteobacteria</taxon>
        <taxon>Pasteurellales</taxon>
        <taxon>Pasteurellaceae</taxon>
        <taxon>Basfia</taxon>
    </lineage>
</organism>
<proteinExistence type="inferred from homology"/>
<keyword id="KW-0067">ATP-binding</keyword>
<keyword id="KW-0963">Cytoplasm</keyword>
<keyword id="KW-0237">DNA synthesis</keyword>
<keyword id="KW-0418">Kinase</keyword>
<keyword id="KW-0479">Metal-binding</keyword>
<keyword id="KW-0547">Nucleotide-binding</keyword>
<keyword id="KW-0808">Transferase</keyword>
<keyword id="KW-0862">Zinc</keyword>
<reference key="1">
    <citation type="journal article" date="2004" name="Nat. Biotechnol.">
        <title>The genome sequence of the capnophilic rumen bacterium Mannheimia succiniciproducens.</title>
        <authorList>
            <person name="Hong S.H."/>
            <person name="Kim J.S."/>
            <person name="Lee S.Y."/>
            <person name="In Y.H."/>
            <person name="Choi S.S."/>
            <person name="Rih J.-K."/>
            <person name="Kim C.H."/>
            <person name="Jeong H."/>
            <person name="Hur C.G."/>
            <person name="Kim J.J."/>
        </authorList>
    </citation>
    <scope>NUCLEOTIDE SEQUENCE [LARGE SCALE GENOMIC DNA]</scope>
    <source>
        <strain>KCTC 0769BP / MBEL55E</strain>
    </source>
</reference>
<sequence>MAKLYFYYSTMNAGKSTTLLQSAYNYNERNMNTLVYTAAIDDRFGAGRVTSRIGISQQAKLFNRESNLFEEIKRHLASEKLHCILIDEAQFLTKQQVYQLSDVVDLLNIPVLCYGLRTDFQAELFEGSQYLLAWADQLEELKTICHCGRKANFVLRLNERGDVVKDGEQIQIGGNERYLSVCRFHFKQKTGKLHN</sequence>
<protein>
    <recommendedName>
        <fullName evidence="1">Thymidine kinase</fullName>
        <ecNumber evidence="1">2.7.1.21</ecNumber>
    </recommendedName>
</protein>